<sequence>MPYVTMKQLLETGVHFGHQTRRWNPKMRPFIFGARNGIHIIDLQQTVKLYQKAHDFISNVVAGGGRVIFVGTKRQAQESVKKEAERVGQFSVTNRWMGGMLTNFQTIKKSIDRMKTLERMFEDGSIKRFPKKEIVMMGREVAKLNDNLGGIKHMDRLPQAAFIIDPKREEIAVQECRKLGIPIVAVVDTNCDPDVIDYVIPGNDDAIRAIKLFAASIAEACMEGAAQNKDVEPVADKDEKPEAAPVDEAETATETTGE</sequence>
<protein>
    <recommendedName>
        <fullName evidence="1">Small ribosomal subunit protein uS2</fullName>
    </recommendedName>
    <alternativeName>
        <fullName evidence="3">30S ribosomal protein S2</fullName>
    </alternativeName>
</protein>
<organism>
    <name type="scientific">Solidesulfovibrio magneticus (strain ATCC 700980 / DSM 13731 / RS-1)</name>
    <name type="common">Desulfovibrio magneticus</name>
    <dbReference type="NCBI Taxonomy" id="573370"/>
    <lineage>
        <taxon>Bacteria</taxon>
        <taxon>Pseudomonadati</taxon>
        <taxon>Thermodesulfobacteriota</taxon>
        <taxon>Desulfovibrionia</taxon>
        <taxon>Desulfovibrionales</taxon>
        <taxon>Desulfovibrionaceae</taxon>
        <taxon>Solidesulfovibrio</taxon>
    </lineage>
</organism>
<comment type="similarity">
    <text evidence="1">Belongs to the universal ribosomal protein uS2 family.</text>
</comment>
<accession>C4XMY2</accession>
<gene>
    <name evidence="1" type="primary">rpsB</name>
    <name type="ordered locus">DMR_37940</name>
</gene>
<feature type="chain" id="PRO_1000204881" description="Small ribosomal subunit protein uS2">
    <location>
        <begin position="1"/>
        <end position="258"/>
    </location>
</feature>
<feature type="region of interest" description="Disordered" evidence="2">
    <location>
        <begin position="226"/>
        <end position="258"/>
    </location>
</feature>
<feature type="compositionally biased region" description="Basic and acidic residues" evidence="2">
    <location>
        <begin position="229"/>
        <end position="242"/>
    </location>
</feature>
<feature type="compositionally biased region" description="Acidic residues" evidence="2">
    <location>
        <begin position="245"/>
        <end position="258"/>
    </location>
</feature>
<reference key="1">
    <citation type="journal article" date="2009" name="Genome Res.">
        <title>Whole genome sequence of Desulfovibrio magneticus strain RS-1 revealed common gene clusters in magnetotactic bacteria.</title>
        <authorList>
            <person name="Nakazawa H."/>
            <person name="Arakaki A."/>
            <person name="Narita-Yamada S."/>
            <person name="Yashiro I."/>
            <person name="Jinno K."/>
            <person name="Aoki N."/>
            <person name="Tsuruyama A."/>
            <person name="Okamura Y."/>
            <person name="Tanikawa S."/>
            <person name="Fujita N."/>
            <person name="Takeyama H."/>
            <person name="Matsunaga T."/>
        </authorList>
    </citation>
    <scope>NUCLEOTIDE SEQUENCE [LARGE SCALE GENOMIC DNA]</scope>
    <source>
        <strain>ATCC 700980 / DSM 13731 / RS-1</strain>
    </source>
</reference>
<proteinExistence type="inferred from homology"/>
<keyword id="KW-0687">Ribonucleoprotein</keyword>
<keyword id="KW-0689">Ribosomal protein</keyword>
<dbReference type="EMBL" id="AP010904">
    <property type="protein sequence ID" value="BAH77285.1"/>
    <property type="molecule type" value="Genomic_DNA"/>
</dbReference>
<dbReference type="RefSeq" id="WP_015862425.1">
    <property type="nucleotide sequence ID" value="NC_012796.1"/>
</dbReference>
<dbReference type="SMR" id="C4XMY2"/>
<dbReference type="STRING" id="573370.DMR_37940"/>
<dbReference type="KEGG" id="dma:DMR_37940"/>
<dbReference type="eggNOG" id="COG0052">
    <property type="taxonomic scope" value="Bacteria"/>
</dbReference>
<dbReference type="HOGENOM" id="CLU_040318_1_2_7"/>
<dbReference type="OrthoDB" id="9808036at2"/>
<dbReference type="Proteomes" id="UP000009071">
    <property type="component" value="Chromosome"/>
</dbReference>
<dbReference type="GO" id="GO:0022627">
    <property type="term" value="C:cytosolic small ribosomal subunit"/>
    <property type="evidence" value="ECO:0007669"/>
    <property type="project" value="TreeGrafter"/>
</dbReference>
<dbReference type="GO" id="GO:0003735">
    <property type="term" value="F:structural constituent of ribosome"/>
    <property type="evidence" value="ECO:0007669"/>
    <property type="project" value="InterPro"/>
</dbReference>
<dbReference type="GO" id="GO:0006412">
    <property type="term" value="P:translation"/>
    <property type="evidence" value="ECO:0007669"/>
    <property type="project" value="UniProtKB-UniRule"/>
</dbReference>
<dbReference type="CDD" id="cd01425">
    <property type="entry name" value="RPS2"/>
    <property type="match status" value="1"/>
</dbReference>
<dbReference type="FunFam" id="1.10.287.610:FF:000001">
    <property type="entry name" value="30S ribosomal protein S2"/>
    <property type="match status" value="1"/>
</dbReference>
<dbReference type="Gene3D" id="3.40.50.10490">
    <property type="entry name" value="Glucose-6-phosphate isomerase like protein, domain 1"/>
    <property type="match status" value="1"/>
</dbReference>
<dbReference type="Gene3D" id="1.10.287.610">
    <property type="entry name" value="Helix hairpin bin"/>
    <property type="match status" value="1"/>
</dbReference>
<dbReference type="HAMAP" id="MF_00291_B">
    <property type="entry name" value="Ribosomal_uS2_B"/>
    <property type="match status" value="1"/>
</dbReference>
<dbReference type="InterPro" id="IPR001865">
    <property type="entry name" value="Ribosomal_uS2"/>
</dbReference>
<dbReference type="InterPro" id="IPR005706">
    <property type="entry name" value="Ribosomal_uS2_bac/mit/plastid"/>
</dbReference>
<dbReference type="InterPro" id="IPR018130">
    <property type="entry name" value="Ribosomal_uS2_CS"/>
</dbReference>
<dbReference type="InterPro" id="IPR023591">
    <property type="entry name" value="Ribosomal_uS2_flav_dom_sf"/>
</dbReference>
<dbReference type="NCBIfam" id="TIGR01011">
    <property type="entry name" value="rpsB_bact"/>
    <property type="match status" value="1"/>
</dbReference>
<dbReference type="PANTHER" id="PTHR12534">
    <property type="entry name" value="30S RIBOSOMAL PROTEIN S2 PROKARYOTIC AND ORGANELLAR"/>
    <property type="match status" value="1"/>
</dbReference>
<dbReference type="PANTHER" id="PTHR12534:SF0">
    <property type="entry name" value="SMALL RIBOSOMAL SUBUNIT PROTEIN US2M"/>
    <property type="match status" value="1"/>
</dbReference>
<dbReference type="Pfam" id="PF00318">
    <property type="entry name" value="Ribosomal_S2"/>
    <property type="match status" value="1"/>
</dbReference>
<dbReference type="PRINTS" id="PR00395">
    <property type="entry name" value="RIBOSOMALS2"/>
</dbReference>
<dbReference type="SUPFAM" id="SSF52313">
    <property type="entry name" value="Ribosomal protein S2"/>
    <property type="match status" value="1"/>
</dbReference>
<dbReference type="PROSITE" id="PS00962">
    <property type="entry name" value="RIBOSOMAL_S2_1"/>
    <property type="match status" value="1"/>
</dbReference>
<evidence type="ECO:0000255" key="1">
    <source>
        <dbReference type="HAMAP-Rule" id="MF_00291"/>
    </source>
</evidence>
<evidence type="ECO:0000256" key="2">
    <source>
        <dbReference type="SAM" id="MobiDB-lite"/>
    </source>
</evidence>
<evidence type="ECO:0000305" key="3"/>
<name>RS2_SOLM1</name>